<name>PKD1_DICDI</name>
<dbReference type="EC" id="2.7.11.1"/>
<dbReference type="EMBL" id="AAFI02000019">
    <property type="protein sequence ID" value="EAL68758.1"/>
    <property type="molecule type" value="Genomic_DNA"/>
</dbReference>
<dbReference type="EMBL" id="M38794">
    <property type="protein sequence ID" value="AAA33239.1"/>
    <property type="molecule type" value="mRNA"/>
</dbReference>
<dbReference type="PIR" id="PQ0207">
    <property type="entry name" value="PQ0207"/>
</dbReference>
<dbReference type="RefSeq" id="XP_642691.1">
    <property type="nucleotide sequence ID" value="XM_637599.1"/>
</dbReference>
<dbReference type="SMR" id="P34100"/>
<dbReference type="STRING" id="44689.P34100"/>
<dbReference type="GlyGen" id="P34100">
    <property type="glycosylation" value="1 site"/>
</dbReference>
<dbReference type="PaxDb" id="44689-DDB0185224"/>
<dbReference type="EnsemblProtists" id="EAL68758">
    <property type="protein sequence ID" value="EAL68758"/>
    <property type="gene ID" value="DDB_G0277145"/>
</dbReference>
<dbReference type="GeneID" id="8620880"/>
<dbReference type="KEGG" id="ddi:DDB_G0277145"/>
<dbReference type="dictyBase" id="DDB_G0277145">
    <property type="gene designation" value="pkaD"/>
</dbReference>
<dbReference type="VEuPathDB" id="AmoebaDB:DDB_G0277145"/>
<dbReference type="eggNOG" id="KOG0616">
    <property type="taxonomic scope" value="Eukaryota"/>
</dbReference>
<dbReference type="HOGENOM" id="CLU_387059_0_0_1"/>
<dbReference type="InParanoid" id="P34100"/>
<dbReference type="OMA" id="SINNADC"/>
<dbReference type="PRO" id="PR:P34100"/>
<dbReference type="Proteomes" id="UP000002195">
    <property type="component" value="Chromosome 2"/>
</dbReference>
<dbReference type="GO" id="GO:0005952">
    <property type="term" value="C:cAMP-dependent protein kinase complex"/>
    <property type="evidence" value="ECO:0000318"/>
    <property type="project" value="GO_Central"/>
</dbReference>
<dbReference type="GO" id="GO:0005829">
    <property type="term" value="C:cytosol"/>
    <property type="evidence" value="ECO:0000318"/>
    <property type="project" value="GO_Central"/>
</dbReference>
<dbReference type="GO" id="GO:0005524">
    <property type="term" value="F:ATP binding"/>
    <property type="evidence" value="ECO:0007669"/>
    <property type="project" value="UniProtKB-KW"/>
</dbReference>
<dbReference type="GO" id="GO:0004691">
    <property type="term" value="F:cAMP-dependent protein kinase activity"/>
    <property type="evidence" value="ECO:0000318"/>
    <property type="project" value="GO_Central"/>
</dbReference>
<dbReference type="GO" id="GO:0106310">
    <property type="term" value="F:protein serine kinase activity"/>
    <property type="evidence" value="ECO:0007669"/>
    <property type="project" value="RHEA"/>
</dbReference>
<dbReference type="GO" id="GO:0007165">
    <property type="term" value="P:signal transduction"/>
    <property type="evidence" value="ECO:0000318"/>
    <property type="project" value="GO_Central"/>
</dbReference>
<dbReference type="CDD" id="cd05123">
    <property type="entry name" value="STKc_AGC"/>
    <property type="match status" value="1"/>
</dbReference>
<dbReference type="FunFam" id="3.30.200.20:FF:000042">
    <property type="entry name" value="Aurora kinase A"/>
    <property type="match status" value="1"/>
</dbReference>
<dbReference type="FunFam" id="1.10.510.10:FF:000048">
    <property type="entry name" value="Protein kinase C"/>
    <property type="match status" value="1"/>
</dbReference>
<dbReference type="Gene3D" id="3.30.200.20">
    <property type="entry name" value="Phosphorylase Kinase, domain 1"/>
    <property type="match status" value="1"/>
</dbReference>
<dbReference type="Gene3D" id="1.10.510.10">
    <property type="entry name" value="Transferase(Phosphotransferase) domain 1"/>
    <property type="match status" value="1"/>
</dbReference>
<dbReference type="InterPro" id="IPR011009">
    <property type="entry name" value="Kinase-like_dom_sf"/>
</dbReference>
<dbReference type="InterPro" id="IPR000719">
    <property type="entry name" value="Prot_kinase_dom"/>
</dbReference>
<dbReference type="InterPro" id="IPR008271">
    <property type="entry name" value="Ser/Thr_kinase_AS"/>
</dbReference>
<dbReference type="InterPro" id="IPR045270">
    <property type="entry name" value="STKc_AGC"/>
</dbReference>
<dbReference type="PANTHER" id="PTHR24353">
    <property type="entry name" value="CYCLIC NUCLEOTIDE-DEPENDENT PROTEIN KINASE"/>
    <property type="match status" value="1"/>
</dbReference>
<dbReference type="PANTHER" id="PTHR24353:SF110">
    <property type="entry name" value="DEVELOPMENTALLY-REGULATED PROTEIN KINASE 1"/>
    <property type="match status" value="1"/>
</dbReference>
<dbReference type="Pfam" id="PF00069">
    <property type="entry name" value="Pkinase"/>
    <property type="match status" value="1"/>
</dbReference>
<dbReference type="SMART" id="SM00220">
    <property type="entry name" value="S_TKc"/>
    <property type="match status" value="1"/>
</dbReference>
<dbReference type="SUPFAM" id="SSF56112">
    <property type="entry name" value="Protein kinase-like (PK-like)"/>
    <property type="match status" value="1"/>
</dbReference>
<dbReference type="PROSITE" id="PS50011">
    <property type="entry name" value="PROTEIN_KINASE_DOM"/>
    <property type="match status" value="1"/>
</dbReference>
<dbReference type="PROSITE" id="PS00108">
    <property type="entry name" value="PROTEIN_KINASE_ST"/>
    <property type="match status" value="1"/>
</dbReference>
<evidence type="ECO:0000250" key="1"/>
<evidence type="ECO:0000255" key="2">
    <source>
        <dbReference type="PROSITE-ProRule" id="PRU00159"/>
    </source>
</evidence>
<evidence type="ECO:0000255" key="3">
    <source>
        <dbReference type="PROSITE-ProRule" id="PRU10027"/>
    </source>
</evidence>
<evidence type="ECO:0000256" key="4">
    <source>
        <dbReference type="SAM" id="MobiDB-lite"/>
    </source>
</evidence>
<evidence type="ECO:0000269" key="5">
    <source>
    </source>
</evidence>
<evidence type="ECO:0000305" key="6"/>
<comment type="catalytic activity">
    <reaction>
        <text>L-seryl-[protein] + ATP = O-phospho-L-seryl-[protein] + ADP + H(+)</text>
        <dbReference type="Rhea" id="RHEA:17989"/>
        <dbReference type="Rhea" id="RHEA-COMP:9863"/>
        <dbReference type="Rhea" id="RHEA-COMP:11604"/>
        <dbReference type="ChEBI" id="CHEBI:15378"/>
        <dbReference type="ChEBI" id="CHEBI:29999"/>
        <dbReference type="ChEBI" id="CHEBI:30616"/>
        <dbReference type="ChEBI" id="CHEBI:83421"/>
        <dbReference type="ChEBI" id="CHEBI:456216"/>
        <dbReference type="EC" id="2.7.11.1"/>
    </reaction>
</comment>
<comment type="catalytic activity">
    <reaction>
        <text>L-threonyl-[protein] + ATP = O-phospho-L-threonyl-[protein] + ADP + H(+)</text>
        <dbReference type="Rhea" id="RHEA:46608"/>
        <dbReference type="Rhea" id="RHEA-COMP:11060"/>
        <dbReference type="Rhea" id="RHEA-COMP:11605"/>
        <dbReference type="ChEBI" id="CHEBI:15378"/>
        <dbReference type="ChEBI" id="CHEBI:30013"/>
        <dbReference type="ChEBI" id="CHEBI:30616"/>
        <dbReference type="ChEBI" id="CHEBI:61977"/>
        <dbReference type="ChEBI" id="CHEBI:456216"/>
        <dbReference type="EC" id="2.7.11.1"/>
    </reaction>
</comment>
<comment type="developmental stage">
    <text evidence="5">Expressed in vegetatively growing cells and during development.</text>
</comment>
<comment type="similarity">
    <text evidence="6">Belongs to the protein kinase superfamily. AGC Ser/Thr protein kinase family.</text>
</comment>
<comment type="caution">
    <text evidence="6">In contrast to other members of the AGC Ser/Thr protein kinase family, lacks the AGC-kinase C-terminal domain at the C-terminus.</text>
</comment>
<organism>
    <name type="scientific">Dictyostelium discoideum</name>
    <name type="common">Social amoeba</name>
    <dbReference type="NCBI Taxonomy" id="44689"/>
    <lineage>
        <taxon>Eukaryota</taxon>
        <taxon>Amoebozoa</taxon>
        <taxon>Evosea</taxon>
        <taxon>Eumycetozoa</taxon>
        <taxon>Dictyostelia</taxon>
        <taxon>Dictyosteliales</taxon>
        <taxon>Dictyosteliaceae</taxon>
        <taxon>Dictyostelium</taxon>
    </lineage>
</organism>
<proteinExistence type="evidence at transcript level"/>
<accession>P34100</accession>
<accession>Q550C5</accession>
<accession>Q86AR2</accession>
<keyword id="KW-0067">ATP-binding</keyword>
<keyword id="KW-0418">Kinase</keyword>
<keyword id="KW-0547">Nucleotide-binding</keyword>
<keyword id="KW-0597">Phosphoprotein</keyword>
<keyword id="KW-1185">Reference proteome</keyword>
<keyword id="KW-0723">Serine/threonine-protein kinase</keyword>
<keyword id="KW-0808">Transferase</keyword>
<sequence>MSAILNNYQYIPNNSLNSNNSNNGNNSTILSLCDNATQLMDIIMREFNEPIFDYNQNSSEINKSLVKTIKSLLETLTKNLNNINNNINNNISNNNNNNNNNNNNNNNNNNNNNNINNNNNFNTPQIIINDNYKLYTPPPAPMLKGLSCEVPFETMEYMQPLDLSNNNISLNNSCNMINNDNNNNNNNNNNNNNNNNNNNNQQQQFYNAPSSNSTPSHSSPSSPTTSSIPFHPNFTLSQDNFNQQLQNNNNSNNNSNNNNNNNIINNNFLQNSQQTNQSLQFSTTQPNLNNFYDIPKQPIICSSPIVNIPPPFYLDGSIDPVENIDWKRTKISDFNFYGSLGSGSFGTAKLCRHRGSGLFFCSKTLRRETIVHEKHKEHVNNEINIMLNISHPYIVKTYSTFNTPTKIHFIMEYAGKKDLFHHLRANKCFTEQTTKLIVAEIVLAIEYLHAENIIYRDLKPENILIDEKGHIKLTDFGFSKKTVGGKNTSSVCGTFDYMAPEILNSSNGHGKPVDWWALGVVVYELVTGKLPFSNSKESLLNRKADFQLIFQNSYLSDEIKDFIFQLLSVDPSKRLGTFDSCSIRNHKWFSDINWLHLESKYQIDGPLSTLNSFINCDFNINLLKKSKSYTEQQQQQQQLPQQQQQQQQNNQLFNQTLQQQNFNFHPIQPQQQQQQQFFNFQFNNNNFNNNNNNNNNFNEACTSNTCGGTTASIF</sequence>
<reference key="1">
    <citation type="journal article" date="2002" name="Nature">
        <title>Sequence and analysis of chromosome 2 of Dictyostelium discoideum.</title>
        <authorList>
            <person name="Gloeckner G."/>
            <person name="Eichinger L."/>
            <person name="Szafranski K."/>
            <person name="Pachebat J.A."/>
            <person name="Bankier A.T."/>
            <person name="Dear P.H."/>
            <person name="Lehmann R."/>
            <person name="Baumgart C."/>
            <person name="Parra G."/>
            <person name="Abril J.F."/>
            <person name="Guigo R."/>
            <person name="Kumpf K."/>
            <person name="Tunggal B."/>
            <person name="Cox E.C."/>
            <person name="Quail M.A."/>
            <person name="Platzer M."/>
            <person name="Rosenthal A."/>
            <person name="Noegel A.A."/>
        </authorList>
    </citation>
    <scope>NUCLEOTIDE SEQUENCE [LARGE SCALE GENOMIC DNA]</scope>
    <source>
        <strain>AX4</strain>
    </source>
</reference>
<reference key="2">
    <citation type="journal article" date="2005" name="Nature">
        <title>The genome of the social amoeba Dictyostelium discoideum.</title>
        <authorList>
            <person name="Eichinger L."/>
            <person name="Pachebat J.A."/>
            <person name="Gloeckner G."/>
            <person name="Rajandream M.A."/>
            <person name="Sucgang R."/>
            <person name="Berriman M."/>
            <person name="Song J."/>
            <person name="Olsen R."/>
            <person name="Szafranski K."/>
            <person name="Xu Q."/>
            <person name="Tunggal B."/>
            <person name="Kummerfeld S."/>
            <person name="Madera M."/>
            <person name="Konfortov B.A."/>
            <person name="Rivero F."/>
            <person name="Bankier A.T."/>
            <person name="Lehmann R."/>
            <person name="Hamlin N."/>
            <person name="Davies R."/>
            <person name="Gaudet P."/>
            <person name="Fey P."/>
            <person name="Pilcher K."/>
            <person name="Chen G."/>
            <person name="Saunders D."/>
            <person name="Sodergren E.J."/>
            <person name="Davis P."/>
            <person name="Kerhornou A."/>
            <person name="Nie X."/>
            <person name="Hall N."/>
            <person name="Anjard C."/>
            <person name="Hemphill L."/>
            <person name="Bason N."/>
            <person name="Farbrother P."/>
            <person name="Desany B."/>
            <person name="Just E."/>
            <person name="Morio T."/>
            <person name="Rost R."/>
            <person name="Churcher C.M."/>
            <person name="Cooper J."/>
            <person name="Haydock S."/>
            <person name="van Driessche N."/>
            <person name="Cronin A."/>
            <person name="Goodhead I."/>
            <person name="Muzny D.M."/>
            <person name="Mourier T."/>
            <person name="Pain A."/>
            <person name="Lu M."/>
            <person name="Harper D."/>
            <person name="Lindsay R."/>
            <person name="Hauser H."/>
            <person name="James K.D."/>
            <person name="Quiles M."/>
            <person name="Madan Babu M."/>
            <person name="Saito T."/>
            <person name="Buchrieser C."/>
            <person name="Wardroper A."/>
            <person name="Felder M."/>
            <person name="Thangavelu M."/>
            <person name="Johnson D."/>
            <person name="Knights A."/>
            <person name="Loulseged H."/>
            <person name="Mungall K.L."/>
            <person name="Oliver K."/>
            <person name="Price C."/>
            <person name="Quail M.A."/>
            <person name="Urushihara H."/>
            <person name="Hernandez J."/>
            <person name="Rabbinowitsch E."/>
            <person name="Steffen D."/>
            <person name="Sanders M."/>
            <person name="Ma J."/>
            <person name="Kohara Y."/>
            <person name="Sharp S."/>
            <person name="Simmonds M.N."/>
            <person name="Spiegler S."/>
            <person name="Tivey A."/>
            <person name="Sugano S."/>
            <person name="White B."/>
            <person name="Walker D."/>
            <person name="Woodward J.R."/>
            <person name="Winckler T."/>
            <person name="Tanaka Y."/>
            <person name="Shaulsky G."/>
            <person name="Schleicher M."/>
            <person name="Weinstock G.M."/>
            <person name="Rosenthal A."/>
            <person name="Cox E.C."/>
            <person name="Chisholm R.L."/>
            <person name="Gibbs R.A."/>
            <person name="Loomis W.F."/>
            <person name="Platzer M."/>
            <person name="Kay R.R."/>
            <person name="Williams J.G."/>
            <person name="Dear P.H."/>
            <person name="Noegel A.A."/>
            <person name="Barrell B.G."/>
            <person name="Kuspa A."/>
        </authorList>
    </citation>
    <scope>NUCLEOTIDE SEQUENCE [LARGE SCALE GENOMIC DNA]</scope>
    <source>
        <strain>AX4</strain>
    </source>
</reference>
<reference key="3">
    <citation type="journal article" date="1991" name="Gene">
        <title>Isolation of two genes encoding putative protein kinases regulated during Dictyostelium discoideum development.</title>
        <authorList>
            <person name="Buerki E."/>
            <person name="Anjard C."/>
            <person name="Scholder J.-C."/>
            <person name="Reymond C.D."/>
        </authorList>
    </citation>
    <scope>NUCLEOTIDE SEQUENCE [MRNA] OF 299-714</scope>
    <scope>DEVELOPMENTAL STAGE</scope>
</reference>
<protein>
    <recommendedName>
        <fullName>Developmentally-regulated protein kinase 1</fullName>
        <ecNumber>2.7.11.1</ecNumber>
    </recommendedName>
</protein>
<gene>
    <name type="primary">pkaD</name>
    <name type="synonym">PK1</name>
    <name type="ORF">DDB_G0277145</name>
</gene>
<feature type="chain" id="PRO_0000086551" description="Developmentally-regulated protein kinase 1">
    <location>
        <begin position="1"/>
        <end position="714"/>
    </location>
</feature>
<feature type="domain" description="Protein kinase" evidence="2">
    <location>
        <begin position="334"/>
        <end position="589"/>
    </location>
</feature>
<feature type="region of interest" description="Disordered" evidence="4">
    <location>
        <begin position="88"/>
        <end position="122"/>
    </location>
</feature>
<feature type="region of interest" description="Disordered" evidence="4">
    <location>
        <begin position="174"/>
        <end position="266"/>
    </location>
</feature>
<feature type="compositionally biased region" description="Low complexity" evidence="4">
    <location>
        <begin position="174"/>
        <end position="200"/>
    </location>
</feature>
<feature type="compositionally biased region" description="Low complexity" evidence="4">
    <location>
        <begin position="209"/>
        <end position="227"/>
    </location>
</feature>
<feature type="compositionally biased region" description="Low complexity" evidence="4">
    <location>
        <begin position="240"/>
        <end position="266"/>
    </location>
</feature>
<feature type="active site" description="Proton acceptor" evidence="2 3">
    <location>
        <position position="457"/>
    </location>
</feature>
<feature type="binding site" evidence="2">
    <location>
        <begin position="340"/>
        <end position="348"/>
    </location>
    <ligand>
        <name>ATP</name>
        <dbReference type="ChEBI" id="CHEBI:30616"/>
    </ligand>
</feature>
<feature type="binding site" evidence="2">
    <location>
        <position position="363"/>
    </location>
    <ligand>
        <name>ATP</name>
        <dbReference type="ChEBI" id="CHEBI:30616"/>
    </ligand>
</feature>
<feature type="modified residue" description="Phosphothreonine" evidence="1">
    <location>
        <position position="488"/>
    </location>
</feature>
<feature type="sequence conflict" description="In Ref. 3; AAA33239." evidence="6" ref="3">
    <original>IICSSPIVNIPPPFYLDGSIDPVENID</original>
    <variation>LFHKAKFQECHKNLISIVHYVAFKVLT</variation>
    <location>
        <begin position="299"/>
        <end position="325"/>
    </location>
</feature>